<protein>
    <recommendedName>
        <fullName evidence="1">Small ribosomal subunit protein uS2c</fullName>
    </recommendedName>
    <alternativeName>
        <fullName>30S ribosomal protein S2, chloroplastic</fullName>
    </alternativeName>
</protein>
<feature type="chain" id="PRO_0000134294" description="Small ribosomal subunit protein uS2c">
    <location>
        <begin position="1"/>
        <end position="240"/>
    </location>
</feature>
<accession>P30389</accession>
<organism>
    <name type="scientific">Euglena gracilis</name>
    <dbReference type="NCBI Taxonomy" id="3039"/>
    <lineage>
        <taxon>Eukaryota</taxon>
        <taxon>Discoba</taxon>
        <taxon>Euglenozoa</taxon>
        <taxon>Euglenida</taxon>
        <taxon>Spirocuta</taxon>
        <taxon>Euglenophyceae</taxon>
        <taxon>Euglenales</taxon>
        <taxon>Euglenaceae</taxon>
        <taxon>Euglena</taxon>
    </lineage>
</organism>
<keyword id="KW-0150">Chloroplast</keyword>
<keyword id="KW-0934">Plastid</keyword>
<keyword id="KW-0687">Ribonucleoprotein</keyword>
<keyword id="KW-0689">Ribosomal protein</keyword>
<reference key="1">
    <citation type="journal article" date="1993" name="Curr. Genet.">
        <title>A novel Euglena gracilis chloroplast operon encoding four ATP synthase subunits and two ribosomal proteins contains 17 introns.</title>
        <authorList>
            <person name="Drager R.G."/>
            <person name="Hallick R.B."/>
        </authorList>
    </citation>
    <scope>NUCLEOTIDE SEQUENCE [GENOMIC DNA]</scope>
    <source>
        <strain>Z / UTEX 753</strain>
    </source>
</reference>
<reference key="2">
    <citation type="journal article" date="1993" name="Nucleic Acids Res.">
        <title>Complete sequence of Euglena gracilis chloroplast DNA.</title>
        <authorList>
            <person name="Hallick R.B."/>
            <person name="Hong L."/>
            <person name="Drager R.G."/>
            <person name="Favreau M.R."/>
            <person name="Monfort A."/>
            <person name="Orsat B."/>
            <person name="Spielmann A."/>
            <person name="Stutz E."/>
        </authorList>
    </citation>
    <scope>NUCLEOTIDE SEQUENCE [LARGE SCALE GENOMIC DNA]</scope>
    <source>
        <strain>Z / UTEX 753</strain>
    </source>
</reference>
<dbReference type="EMBL" id="Z11874">
    <property type="protein sequence ID" value="CAA77928.1"/>
    <property type="molecule type" value="Genomic_DNA"/>
</dbReference>
<dbReference type="EMBL" id="X70810">
    <property type="protein sequence ID" value="CAA50111.1"/>
    <property type="molecule type" value="Genomic_DNA"/>
</dbReference>
<dbReference type="PIR" id="S29797">
    <property type="entry name" value="R3EGS2"/>
</dbReference>
<dbReference type="RefSeq" id="NP_041924.1">
    <property type="nucleotide sequence ID" value="NC_001603.2"/>
</dbReference>
<dbReference type="SMR" id="P30389"/>
<dbReference type="GeneID" id="807487"/>
<dbReference type="GO" id="GO:0009507">
    <property type="term" value="C:chloroplast"/>
    <property type="evidence" value="ECO:0007669"/>
    <property type="project" value="UniProtKB-SubCell"/>
</dbReference>
<dbReference type="GO" id="GO:0005763">
    <property type="term" value="C:mitochondrial small ribosomal subunit"/>
    <property type="evidence" value="ECO:0007669"/>
    <property type="project" value="TreeGrafter"/>
</dbReference>
<dbReference type="GO" id="GO:0003735">
    <property type="term" value="F:structural constituent of ribosome"/>
    <property type="evidence" value="ECO:0007669"/>
    <property type="project" value="InterPro"/>
</dbReference>
<dbReference type="GO" id="GO:0006412">
    <property type="term" value="P:translation"/>
    <property type="evidence" value="ECO:0007669"/>
    <property type="project" value="UniProtKB-UniRule"/>
</dbReference>
<dbReference type="CDD" id="cd01425">
    <property type="entry name" value="RPS2"/>
    <property type="match status" value="1"/>
</dbReference>
<dbReference type="Gene3D" id="3.40.50.10490">
    <property type="entry name" value="Glucose-6-phosphate isomerase like protein, domain 1"/>
    <property type="match status" value="1"/>
</dbReference>
<dbReference type="Gene3D" id="1.10.287.610">
    <property type="entry name" value="Helix hairpin bin"/>
    <property type="match status" value="1"/>
</dbReference>
<dbReference type="HAMAP" id="MF_00291_B">
    <property type="entry name" value="Ribosomal_uS2_B"/>
    <property type="match status" value="1"/>
</dbReference>
<dbReference type="InterPro" id="IPR001865">
    <property type="entry name" value="Ribosomal_uS2"/>
</dbReference>
<dbReference type="InterPro" id="IPR005706">
    <property type="entry name" value="Ribosomal_uS2_bac/mit/plastid"/>
</dbReference>
<dbReference type="InterPro" id="IPR018130">
    <property type="entry name" value="Ribosomal_uS2_CS"/>
</dbReference>
<dbReference type="InterPro" id="IPR023591">
    <property type="entry name" value="Ribosomal_uS2_flav_dom_sf"/>
</dbReference>
<dbReference type="NCBIfam" id="TIGR01011">
    <property type="entry name" value="rpsB_bact"/>
    <property type="match status" value="1"/>
</dbReference>
<dbReference type="PANTHER" id="PTHR12534">
    <property type="entry name" value="30S RIBOSOMAL PROTEIN S2 PROKARYOTIC AND ORGANELLAR"/>
    <property type="match status" value="1"/>
</dbReference>
<dbReference type="PANTHER" id="PTHR12534:SF0">
    <property type="entry name" value="SMALL RIBOSOMAL SUBUNIT PROTEIN US2M"/>
    <property type="match status" value="1"/>
</dbReference>
<dbReference type="Pfam" id="PF00318">
    <property type="entry name" value="Ribosomal_S2"/>
    <property type="match status" value="1"/>
</dbReference>
<dbReference type="PRINTS" id="PR00395">
    <property type="entry name" value="RIBOSOMALS2"/>
</dbReference>
<dbReference type="SUPFAM" id="SSF52313">
    <property type="entry name" value="Ribosomal protein S2"/>
    <property type="match status" value="1"/>
</dbReference>
<dbReference type="PROSITE" id="PS00962">
    <property type="entry name" value="RIBOSOMAL_S2_1"/>
    <property type="match status" value="1"/>
</dbReference>
<dbReference type="PROSITE" id="PS00963">
    <property type="entry name" value="RIBOSOMAL_S2_2"/>
    <property type="match status" value="1"/>
</dbReference>
<evidence type="ECO:0000305" key="1"/>
<gene>
    <name type="primary">rps2</name>
</gene>
<sequence>MITVEKMLNSSVHLGHKVKQWNPRMRIYIYGERKGLHIIDLLQTIVCLKKACNFLIRSVRKGKRALFVCTKRFFSILTQKIALKCNSFFVTKRWLGGILTNWITIKNCINKLKQLSKQKEKHHNLLTKKERLVLKKKKLKLKKYFSGMRDMTERPEIVIIIGQNKEINAVRECKKLGIASITILDTNCDPTLTKYPIPSNDDSILSVSLILSVLCNSINRGVNNKVRQKFDKYKKFKKLS</sequence>
<proteinExistence type="inferred from homology"/>
<comment type="subcellular location">
    <subcellularLocation>
        <location>Plastid</location>
        <location>Chloroplast</location>
    </subcellularLocation>
</comment>
<comment type="similarity">
    <text evidence="1">Belongs to the universal ribosomal protein uS2 family.</text>
</comment>
<geneLocation type="chloroplast"/>
<name>RR2_EUGGR</name>